<sequence length="318" mass="33102">MTAPHTAPARVAVLGGTGFIGRVLGARLLAQGAEVLSLARKAPAEPAPGRFVAFDLSNGDPAELTALLDRERIDTVVNAAGGMWGLNDEQMYQANVVLTERLIEAVAAMASPARLVHLGTVHEYGMAPVGTSQRESDPAAPVMEYGKLKLAATEAVVRAVEAGRISGVVLRLGNVVGAGQPGHSLLGVMAAKLDAARAAGETAQLSLQPLTALRDFVDLTDTLDAVLLAAADRSAPPVVNVGTGSASTARHLVELLIEESGVPTEITEVPAPDGTGPETEWQQLDVTVARDSLGWTPRRTLREAVRELWTAQSTAPVA</sequence>
<comment type="function">
    <text evidence="2">Catalyzes the reduction of dTDP-6-deoxy-L-lyxo-4-hexulose to dTDP-6-deoxy-L-talose. Can use NAD(+) or NADP(+).</text>
</comment>
<comment type="catalytic activity">
    <reaction evidence="2">
        <text>dTDP-6-deoxy-beta-L-talose + NAD(+) = dTDP-4-dehydro-beta-L-rhamnose + NADH + H(+)</text>
        <dbReference type="Rhea" id="RHEA:34447"/>
        <dbReference type="ChEBI" id="CHEBI:15378"/>
        <dbReference type="ChEBI" id="CHEBI:57540"/>
        <dbReference type="ChEBI" id="CHEBI:57945"/>
        <dbReference type="ChEBI" id="CHEBI:62830"/>
        <dbReference type="ChEBI" id="CHEBI:68576"/>
        <dbReference type="EC" id="1.1.1.344"/>
    </reaction>
</comment>
<comment type="catalytic activity">
    <reaction evidence="2">
        <text>dTDP-6-deoxy-beta-L-talose + NADP(+) = dTDP-4-dehydro-beta-L-rhamnose + NADPH + H(+)</text>
        <dbReference type="Rhea" id="RHEA:23648"/>
        <dbReference type="ChEBI" id="CHEBI:15378"/>
        <dbReference type="ChEBI" id="CHEBI:57783"/>
        <dbReference type="ChEBI" id="CHEBI:58349"/>
        <dbReference type="ChEBI" id="CHEBI:62830"/>
        <dbReference type="ChEBI" id="CHEBI:68576"/>
        <dbReference type="EC" id="1.1.1.344"/>
    </reaction>
</comment>
<comment type="similarity">
    <text evidence="3">Belongs to the NAD(P)-dependent epimerase/dehydratase family.</text>
</comment>
<accession>E5F146</accession>
<protein>
    <recommendedName>
        <fullName>dTDP-6-deoxy-L-talose 4-dehydrogenase (NAD(P)(+))</fullName>
        <ecNumber>1.1.1.344</ecNumber>
    </recommendedName>
</protein>
<organism>
    <name type="scientific">Kitasatospora kifunensis</name>
    <name type="common">Streptomyces kifunensis</name>
    <dbReference type="NCBI Taxonomy" id="58351"/>
    <lineage>
        <taxon>Bacteria</taxon>
        <taxon>Bacillati</taxon>
        <taxon>Actinomycetota</taxon>
        <taxon>Actinomycetes</taxon>
        <taxon>Kitasatosporales</taxon>
        <taxon>Streptomycetaceae</taxon>
        <taxon>Kitasatospora</taxon>
    </lineage>
</organism>
<feature type="chain" id="PRO_0000424196" description="dTDP-6-deoxy-L-talose 4-dehydrogenase (NAD(P)(+))">
    <location>
        <begin position="1"/>
        <end position="318"/>
    </location>
</feature>
<feature type="active site" description="Proton acceptor" evidence="1">
    <location>
        <position position="145"/>
    </location>
</feature>
<feature type="binding site" evidence="1">
    <location>
        <begin position="19"/>
        <end position="20"/>
    </location>
    <ligand>
        <name>NAD(+)</name>
        <dbReference type="ChEBI" id="CHEBI:57540"/>
    </ligand>
</feature>
<feature type="binding site" evidence="1">
    <location>
        <begin position="60"/>
        <end position="61"/>
    </location>
    <ligand>
        <name>NAD(+)</name>
        <dbReference type="ChEBI" id="CHEBI:57540"/>
    </ligand>
</feature>
<feature type="binding site" evidence="1">
    <location>
        <position position="95"/>
    </location>
    <ligand>
        <name>NAD(+)</name>
        <dbReference type="ChEBI" id="CHEBI:57540"/>
    </ligand>
</feature>
<feature type="binding site" evidence="1">
    <location>
        <position position="120"/>
    </location>
    <ligand>
        <name>NAD(+)</name>
        <dbReference type="ChEBI" id="CHEBI:57540"/>
    </ligand>
</feature>
<feature type="binding site" evidence="1">
    <location>
        <position position="120"/>
    </location>
    <ligand>
        <name>substrate</name>
    </ligand>
</feature>
<feature type="binding site" evidence="1">
    <location>
        <position position="145"/>
    </location>
    <ligand>
        <name>NAD(+)</name>
        <dbReference type="ChEBI" id="CHEBI:57540"/>
    </ligand>
</feature>
<feature type="binding site" evidence="1">
    <location>
        <position position="145"/>
    </location>
    <ligand>
        <name>substrate</name>
    </ligand>
</feature>
<feature type="binding site" evidence="1">
    <location>
        <position position="149"/>
    </location>
    <ligand>
        <name>NAD(+)</name>
        <dbReference type="ChEBI" id="CHEBI:57540"/>
    </ligand>
</feature>
<evidence type="ECO:0000250" key="1"/>
<evidence type="ECO:0000269" key="2">
    <source>
    </source>
</evidence>
<evidence type="ECO:0000305" key="3"/>
<gene>
    <name type="primary">tal</name>
</gene>
<dbReference type="EC" id="1.1.1.344"/>
<dbReference type="EMBL" id="HM132058">
    <property type="protein sequence ID" value="ADO32602.1"/>
    <property type="molecule type" value="Genomic_DNA"/>
</dbReference>
<dbReference type="SMR" id="E5F146"/>
<dbReference type="KEGG" id="ag:ADO32602"/>
<dbReference type="BRENDA" id="1.1.1.344">
    <property type="organism ID" value="12319"/>
</dbReference>
<dbReference type="GO" id="GO:0047003">
    <property type="term" value="F:dTDP-6-deoxy-L-talose 4-dehydrogenase activity"/>
    <property type="evidence" value="ECO:0007669"/>
    <property type="project" value="RHEA"/>
</dbReference>
<dbReference type="Gene3D" id="3.40.50.720">
    <property type="entry name" value="NAD(P)-binding Rossmann-like Domain"/>
    <property type="match status" value="1"/>
</dbReference>
<dbReference type="InterPro" id="IPR001509">
    <property type="entry name" value="Epimerase_deHydtase"/>
</dbReference>
<dbReference type="InterPro" id="IPR036291">
    <property type="entry name" value="NAD(P)-bd_dom_sf"/>
</dbReference>
<dbReference type="PANTHER" id="PTHR43000">
    <property type="entry name" value="DTDP-D-GLUCOSE 4,6-DEHYDRATASE-RELATED"/>
    <property type="match status" value="1"/>
</dbReference>
<dbReference type="Pfam" id="PF01370">
    <property type="entry name" value="Epimerase"/>
    <property type="match status" value="1"/>
</dbReference>
<dbReference type="SUPFAM" id="SSF51735">
    <property type="entry name" value="NAD(P)-binding Rossmann-fold domains"/>
    <property type="match status" value="1"/>
</dbReference>
<name>TAL_KITKI</name>
<reference key="1">
    <citation type="journal article" date="2010" name="Carbohydr. Res.">
        <title>Cloning and in vitro characterization of dTDP-6-deoxy-L-talose biosynthetic genes from Kitasatospora kifunensis featuring the dTDP-6-deoxy-L-lyxo-4-hexulose reductase that synthesizes dTDP-6-deoxy-L-talose.</title>
        <authorList>
            <person name="Karki S."/>
            <person name="Yoo H.G."/>
            <person name="Kwon S.Y."/>
            <person name="Suh J.W."/>
            <person name="Kwon H.J."/>
        </authorList>
    </citation>
    <scope>NUCLEOTIDE SEQUENCE [GENOMIC DNA]</scope>
    <scope>FUNCTION</scope>
    <scope>CATALYTIC ACTIVITY</scope>
    <source>
        <strain>MJM341</strain>
    </source>
</reference>
<keyword id="KW-0520">NAD</keyword>
<keyword id="KW-0521">NADP</keyword>
<keyword id="KW-0560">Oxidoreductase</keyword>
<proteinExistence type="evidence at protein level"/>